<dbReference type="EC" id="3.5.1.88" evidence="1"/>
<dbReference type="EMBL" id="AF012285">
    <property type="protein sequence ID" value="AAC24930.1"/>
    <property type="molecule type" value="Genomic_DNA"/>
</dbReference>
<dbReference type="EMBL" id="AL009126">
    <property type="protein sequence ID" value="CAB13329.1"/>
    <property type="molecule type" value="Genomic_DNA"/>
</dbReference>
<dbReference type="PIR" id="D69862">
    <property type="entry name" value="D69862"/>
</dbReference>
<dbReference type="RefSeq" id="NP_389339.1">
    <property type="nucleotide sequence ID" value="NC_000964.3"/>
</dbReference>
<dbReference type="SMR" id="Q45495"/>
<dbReference type="FunCoup" id="Q45495">
    <property type="interactions" value="35"/>
</dbReference>
<dbReference type="STRING" id="224308.BSU14560"/>
<dbReference type="PaxDb" id="224308-BSU14560"/>
<dbReference type="EnsemblBacteria" id="CAB13329">
    <property type="protein sequence ID" value="CAB13329"/>
    <property type="gene ID" value="BSU_14560"/>
</dbReference>
<dbReference type="GeneID" id="939491"/>
<dbReference type="KEGG" id="bsu:BSU14560"/>
<dbReference type="PATRIC" id="fig|224308.179.peg.1587"/>
<dbReference type="eggNOG" id="COG0242">
    <property type="taxonomic scope" value="Bacteria"/>
</dbReference>
<dbReference type="InParanoid" id="Q45495"/>
<dbReference type="OrthoDB" id="9784988at2"/>
<dbReference type="PhylomeDB" id="Q45495"/>
<dbReference type="BioCyc" id="BSUB:BSU14560-MONOMER"/>
<dbReference type="Proteomes" id="UP000001570">
    <property type="component" value="Chromosome"/>
</dbReference>
<dbReference type="GO" id="GO:0046872">
    <property type="term" value="F:metal ion binding"/>
    <property type="evidence" value="ECO:0007669"/>
    <property type="project" value="UniProtKB-KW"/>
</dbReference>
<dbReference type="GO" id="GO:0042586">
    <property type="term" value="F:peptide deformylase activity"/>
    <property type="evidence" value="ECO:0000318"/>
    <property type="project" value="GO_Central"/>
</dbReference>
<dbReference type="GO" id="GO:0043686">
    <property type="term" value="P:co-translational protein modification"/>
    <property type="evidence" value="ECO:0000318"/>
    <property type="project" value="GO_Central"/>
</dbReference>
<dbReference type="GO" id="GO:0006412">
    <property type="term" value="P:translation"/>
    <property type="evidence" value="ECO:0007669"/>
    <property type="project" value="UniProtKB-UniRule"/>
</dbReference>
<dbReference type="CDD" id="cd00487">
    <property type="entry name" value="Pep_deformylase"/>
    <property type="match status" value="1"/>
</dbReference>
<dbReference type="FunFam" id="3.90.45.10:FF:000002">
    <property type="entry name" value="Peptide deformylase"/>
    <property type="match status" value="1"/>
</dbReference>
<dbReference type="Gene3D" id="3.90.45.10">
    <property type="entry name" value="Peptide deformylase"/>
    <property type="match status" value="1"/>
</dbReference>
<dbReference type="HAMAP" id="MF_00163">
    <property type="entry name" value="Pep_deformylase"/>
    <property type="match status" value="1"/>
</dbReference>
<dbReference type="InterPro" id="IPR023635">
    <property type="entry name" value="Peptide_deformylase"/>
</dbReference>
<dbReference type="InterPro" id="IPR036821">
    <property type="entry name" value="Peptide_deformylase_sf"/>
</dbReference>
<dbReference type="NCBIfam" id="TIGR00079">
    <property type="entry name" value="pept_deformyl"/>
    <property type="match status" value="1"/>
</dbReference>
<dbReference type="PANTHER" id="PTHR10458">
    <property type="entry name" value="PEPTIDE DEFORMYLASE"/>
    <property type="match status" value="1"/>
</dbReference>
<dbReference type="PANTHER" id="PTHR10458:SF8">
    <property type="entry name" value="PEPTIDE DEFORMYLASE 2"/>
    <property type="match status" value="1"/>
</dbReference>
<dbReference type="Pfam" id="PF01327">
    <property type="entry name" value="Pep_deformylase"/>
    <property type="match status" value="1"/>
</dbReference>
<dbReference type="PIRSF" id="PIRSF004749">
    <property type="entry name" value="Pep_def"/>
    <property type="match status" value="1"/>
</dbReference>
<dbReference type="PRINTS" id="PR01576">
    <property type="entry name" value="PDEFORMYLASE"/>
</dbReference>
<dbReference type="SUPFAM" id="SSF56420">
    <property type="entry name" value="Peptide deformylase"/>
    <property type="match status" value="1"/>
</dbReference>
<protein>
    <recommendedName>
        <fullName evidence="1">Peptide deformylase 2</fullName>
        <shortName evidence="1">PDF 2</shortName>
        <ecNumber evidence="1">3.5.1.88</ecNumber>
    </recommendedName>
    <alternativeName>
        <fullName evidence="1">Polypeptide deformylase 2</fullName>
    </alternativeName>
</protein>
<evidence type="ECO:0000255" key="1">
    <source>
        <dbReference type="HAMAP-Rule" id="MF_00163"/>
    </source>
</evidence>
<reference key="1">
    <citation type="submission" date="1997-07" db="EMBL/GenBank/DDBJ databases">
        <title>Sequence analysis of the mobA-ampS region of the Bacillus subtilis chromosome.</title>
        <authorList>
            <person name="Caldwell R.M."/>
            <person name="Ferrari E."/>
        </authorList>
    </citation>
    <scope>NUCLEOTIDE SEQUENCE [GENOMIC DNA]</scope>
    <source>
        <strain>168</strain>
    </source>
</reference>
<reference key="2">
    <citation type="journal article" date="1997" name="Nature">
        <title>The complete genome sequence of the Gram-positive bacterium Bacillus subtilis.</title>
        <authorList>
            <person name="Kunst F."/>
            <person name="Ogasawara N."/>
            <person name="Moszer I."/>
            <person name="Albertini A.M."/>
            <person name="Alloni G."/>
            <person name="Azevedo V."/>
            <person name="Bertero M.G."/>
            <person name="Bessieres P."/>
            <person name="Bolotin A."/>
            <person name="Borchert S."/>
            <person name="Borriss R."/>
            <person name="Boursier L."/>
            <person name="Brans A."/>
            <person name="Braun M."/>
            <person name="Brignell S.C."/>
            <person name="Bron S."/>
            <person name="Brouillet S."/>
            <person name="Bruschi C.V."/>
            <person name="Caldwell B."/>
            <person name="Capuano V."/>
            <person name="Carter N.M."/>
            <person name="Choi S.-K."/>
            <person name="Codani J.-J."/>
            <person name="Connerton I.F."/>
            <person name="Cummings N.J."/>
            <person name="Daniel R.A."/>
            <person name="Denizot F."/>
            <person name="Devine K.M."/>
            <person name="Duesterhoeft A."/>
            <person name="Ehrlich S.D."/>
            <person name="Emmerson P.T."/>
            <person name="Entian K.-D."/>
            <person name="Errington J."/>
            <person name="Fabret C."/>
            <person name="Ferrari E."/>
            <person name="Foulger D."/>
            <person name="Fritz C."/>
            <person name="Fujita M."/>
            <person name="Fujita Y."/>
            <person name="Fuma S."/>
            <person name="Galizzi A."/>
            <person name="Galleron N."/>
            <person name="Ghim S.-Y."/>
            <person name="Glaser P."/>
            <person name="Goffeau A."/>
            <person name="Golightly E.J."/>
            <person name="Grandi G."/>
            <person name="Guiseppi G."/>
            <person name="Guy B.J."/>
            <person name="Haga K."/>
            <person name="Haiech J."/>
            <person name="Harwood C.R."/>
            <person name="Henaut A."/>
            <person name="Hilbert H."/>
            <person name="Holsappel S."/>
            <person name="Hosono S."/>
            <person name="Hullo M.-F."/>
            <person name="Itaya M."/>
            <person name="Jones L.-M."/>
            <person name="Joris B."/>
            <person name="Karamata D."/>
            <person name="Kasahara Y."/>
            <person name="Klaerr-Blanchard M."/>
            <person name="Klein C."/>
            <person name="Kobayashi Y."/>
            <person name="Koetter P."/>
            <person name="Koningstein G."/>
            <person name="Krogh S."/>
            <person name="Kumano M."/>
            <person name="Kurita K."/>
            <person name="Lapidus A."/>
            <person name="Lardinois S."/>
            <person name="Lauber J."/>
            <person name="Lazarevic V."/>
            <person name="Lee S.-M."/>
            <person name="Levine A."/>
            <person name="Liu H."/>
            <person name="Masuda S."/>
            <person name="Mauel C."/>
            <person name="Medigue C."/>
            <person name="Medina N."/>
            <person name="Mellado R.P."/>
            <person name="Mizuno M."/>
            <person name="Moestl D."/>
            <person name="Nakai S."/>
            <person name="Noback M."/>
            <person name="Noone D."/>
            <person name="O'Reilly M."/>
            <person name="Ogawa K."/>
            <person name="Ogiwara A."/>
            <person name="Oudega B."/>
            <person name="Park S.-H."/>
            <person name="Parro V."/>
            <person name="Pohl T.M."/>
            <person name="Portetelle D."/>
            <person name="Porwollik S."/>
            <person name="Prescott A.M."/>
            <person name="Presecan E."/>
            <person name="Pujic P."/>
            <person name="Purnelle B."/>
            <person name="Rapoport G."/>
            <person name="Rey M."/>
            <person name="Reynolds S."/>
            <person name="Rieger M."/>
            <person name="Rivolta C."/>
            <person name="Rocha E."/>
            <person name="Roche B."/>
            <person name="Rose M."/>
            <person name="Sadaie Y."/>
            <person name="Sato T."/>
            <person name="Scanlan E."/>
            <person name="Schleich S."/>
            <person name="Schroeter R."/>
            <person name="Scoffone F."/>
            <person name="Sekiguchi J."/>
            <person name="Sekowska A."/>
            <person name="Seror S.J."/>
            <person name="Serror P."/>
            <person name="Shin B.-S."/>
            <person name="Soldo B."/>
            <person name="Sorokin A."/>
            <person name="Tacconi E."/>
            <person name="Takagi T."/>
            <person name="Takahashi H."/>
            <person name="Takemaru K."/>
            <person name="Takeuchi M."/>
            <person name="Tamakoshi A."/>
            <person name="Tanaka T."/>
            <person name="Terpstra P."/>
            <person name="Tognoni A."/>
            <person name="Tosato V."/>
            <person name="Uchiyama S."/>
            <person name="Vandenbol M."/>
            <person name="Vannier F."/>
            <person name="Vassarotti A."/>
            <person name="Viari A."/>
            <person name="Wambutt R."/>
            <person name="Wedler E."/>
            <person name="Wedler H."/>
            <person name="Weitzenegger T."/>
            <person name="Winters P."/>
            <person name="Wipat A."/>
            <person name="Yamamoto H."/>
            <person name="Yamane K."/>
            <person name="Yasumoto K."/>
            <person name="Yata K."/>
            <person name="Yoshida K."/>
            <person name="Yoshikawa H.-F."/>
            <person name="Zumstein E."/>
            <person name="Yoshikawa H."/>
            <person name="Danchin A."/>
        </authorList>
    </citation>
    <scope>NUCLEOTIDE SEQUENCE [LARGE SCALE GENOMIC DNA]</scope>
    <source>
        <strain>168</strain>
    </source>
</reference>
<reference key="3">
    <citation type="journal article" date="2001" name="Microbiology">
        <title>YkrB is the main peptide deformylase in Bacillus subtilis, a eubacterium containing two functional peptide deformylases.</title>
        <authorList>
            <person name="Haas M."/>
            <person name="Beyer D."/>
            <person name="Gahlmann R."/>
            <person name="Freiberg C."/>
        </authorList>
    </citation>
    <scope>CHARACTERIZATION</scope>
</reference>
<keyword id="KW-0378">Hydrolase</keyword>
<keyword id="KW-0408">Iron</keyword>
<keyword id="KW-0479">Metal-binding</keyword>
<keyword id="KW-0648">Protein biosynthesis</keyword>
<keyword id="KW-1185">Reference proteome</keyword>
<organism>
    <name type="scientific">Bacillus subtilis (strain 168)</name>
    <dbReference type="NCBI Taxonomy" id="224308"/>
    <lineage>
        <taxon>Bacteria</taxon>
        <taxon>Bacillati</taxon>
        <taxon>Bacillota</taxon>
        <taxon>Bacilli</taxon>
        <taxon>Bacillales</taxon>
        <taxon>Bacillaceae</taxon>
        <taxon>Bacillus</taxon>
    </lineage>
</organism>
<comment type="function">
    <text evidence="1">Removes the formyl group from the N-terminal Met of newly synthesized proteins. Requires at least a dipeptide for an efficient rate of reaction. N-terminal L-methionine is a prerequisite for activity but the enzyme has broad specificity at other positions.</text>
</comment>
<comment type="catalytic activity">
    <reaction evidence="1">
        <text>N-terminal N-formyl-L-methionyl-[peptide] + H2O = N-terminal L-methionyl-[peptide] + formate</text>
        <dbReference type="Rhea" id="RHEA:24420"/>
        <dbReference type="Rhea" id="RHEA-COMP:10639"/>
        <dbReference type="Rhea" id="RHEA-COMP:10640"/>
        <dbReference type="ChEBI" id="CHEBI:15377"/>
        <dbReference type="ChEBI" id="CHEBI:15740"/>
        <dbReference type="ChEBI" id="CHEBI:49298"/>
        <dbReference type="ChEBI" id="CHEBI:64731"/>
        <dbReference type="EC" id="3.5.1.88"/>
    </reaction>
</comment>
<comment type="cofactor">
    <cofactor evidence="1">
        <name>Fe(2+)</name>
        <dbReference type="ChEBI" id="CHEBI:29033"/>
    </cofactor>
    <text evidence="1">Binds 1 Fe(2+) ion.</text>
</comment>
<comment type="similarity">
    <text evidence="1">Belongs to the polypeptide deformylase family.</text>
</comment>
<sequence>MITMENIVRDGHPALRETAEPVELPPTDAEKQQLADMIEFVKNSQNPELAEKYKLRPGVGLAAPQINIKKRMIAVHAEDASGKLYSYALFNPKIVSHSVEKSYLTSGEGCLSVDEAIPGYVPRYARIRVKGTTLEGENIDIRLKGFPAIVFQHEIDHLNGVMFYDHIDKENPFKEPENAIAIER</sequence>
<accession>Q45495</accession>
<gene>
    <name type="primary">defB</name>
    <name type="synonym">ykrB</name>
    <name type="ordered locus">BSU14560</name>
</gene>
<proteinExistence type="evidence at protein level"/>
<name>DEF2_BACSU</name>
<feature type="chain" id="PRO_0000082740" description="Peptide deformylase 2">
    <location>
        <begin position="1"/>
        <end position="184"/>
    </location>
</feature>
<feature type="active site" evidence="1">
    <location>
        <position position="154"/>
    </location>
</feature>
<feature type="binding site" evidence="1">
    <location>
        <position position="110"/>
    </location>
    <ligand>
        <name>Fe cation</name>
        <dbReference type="ChEBI" id="CHEBI:24875"/>
    </ligand>
</feature>
<feature type="binding site" evidence="1">
    <location>
        <position position="153"/>
    </location>
    <ligand>
        <name>Fe cation</name>
        <dbReference type="ChEBI" id="CHEBI:24875"/>
    </ligand>
</feature>
<feature type="binding site" evidence="1">
    <location>
        <position position="157"/>
    </location>
    <ligand>
        <name>Fe cation</name>
        <dbReference type="ChEBI" id="CHEBI:24875"/>
    </ligand>
</feature>